<name>CD4_CHLAE</name>
<protein>
    <recommendedName>
        <fullName>T-cell surface glycoprotein CD4</fullName>
    </recommendedName>
    <alternativeName>
        <fullName>T-cell surface antigen T4/Leu-3</fullName>
    </alternativeName>
    <cdAntigenName>CD4</cdAntigenName>
</protein>
<sequence length="458" mass="51158">MNWGIPFRHLLLVLQLALLPAVTQGKKVVLGKKGDTVELTCNASQKTTTQFHWKNSNQIKILGKQGSFLTKGSSKLRDRIDSRKSLWDQGCFSMIIKNLKIEDSETYICEVENKKEEVELLVFGLTANSDTHLLQGQSLTLTLESPPGSSPSVKCRSPRGKNIQGGRTLSVPQLERQDSGTWTCTVSQDQNTVEFKIDIMVLAFQKASSTVYKKEGEQVEFSFPLAFTLEKLTGSGELWWQAERASSSKSWITFDLKNKEVSVKQVTQDPKLQMGKKLPLNLTLPQALPQYAGSGNLTLALEAKTGKLHQEVNLVVMRATQFQENLTCEVWGPTSPKLMLSLKLENKAATVSKQAKAVWVLNPEEGMWQCLLSDSGQVLLESNIKVLPTWPTPVQPMALIVLGGVAGLLLFTGLGIFFCVRCRHRRRQAQRMSQIKRLLSEKKTCQCPHRFQKTCSPI</sequence>
<reference key="1">
    <citation type="submission" date="1996-07" db="EMBL/GenBank/DDBJ databases">
        <title>Molecular cloning and expression of African green monkey CD4.</title>
        <authorList>
            <person name="Hashimoto O."/>
            <person name="Tatsumi M."/>
        </authorList>
    </citation>
    <scope>NUCLEOTIDE SEQUENCE</scope>
</reference>
<reference key="2">
    <citation type="journal article" date="1992" name="Eur. J. Immunol.">
        <title>Cloning and sequences of primate CD4 molecules: diversity of the cellular receptor for simian immunodeficiency virus/human immunodeficiency virus.</title>
        <authorList>
            <person name="Fomsgaard A."/>
            <person name="Hirsch V.M."/>
            <person name="Johnson P.R."/>
        </authorList>
    </citation>
    <scope>NUCLEOTIDE SEQUENCE OF 28-424</scope>
    <source>
        <tissue>Blood</tissue>
    </source>
</reference>
<reference key="3">
    <citation type="journal article" date="1997" name="J. Med. Primatol.">
        <title>Relation between phylogeny of African green monkey CD4 genes and their respective simian immunodeficiency virus genes.</title>
        <authorList>
            <person name="Fomsgaard A."/>
            <person name="Mueller-Trutwin M.C."/>
            <person name="Diop O."/>
            <person name="Hansen J."/>
            <person name="Mathiot C."/>
            <person name="Corbet S."/>
            <person name="Barre-Sinoussi F."/>
            <person name="Allan J.S."/>
        </authorList>
    </citation>
    <scope>NUCLEOTIDE SEQUENCE OF 28-424</scope>
    <source>
        <tissue>Peripheral blood</tissue>
    </source>
</reference>
<reference key="4">
    <citation type="journal article" date="1998" name="Mol. Biol. Evol.">
        <title>Nuclear gene trees and the phylogenetic relationships of the mangabeys (Primates: Papionini).</title>
        <authorList>
            <person name="Harris E.E."/>
            <person name="Disotell T.R."/>
        </authorList>
    </citation>
    <scope>NUCLEOTIDE SEQUENCE OF 107-192</scope>
</reference>
<feature type="signal peptide" evidence="1">
    <location>
        <begin position="1"/>
        <end position="25"/>
    </location>
</feature>
<feature type="chain" id="PRO_0000014620" description="T-cell surface glycoprotein CD4">
    <location>
        <begin position="26"/>
        <end position="458"/>
    </location>
</feature>
<feature type="topological domain" description="Extracellular" evidence="3">
    <location>
        <begin position="26"/>
        <end position="396"/>
    </location>
</feature>
<feature type="transmembrane region" description="Helical" evidence="3">
    <location>
        <begin position="397"/>
        <end position="418"/>
    </location>
</feature>
<feature type="topological domain" description="Cytoplasmic" evidence="3">
    <location>
        <begin position="419"/>
        <end position="458"/>
    </location>
</feature>
<feature type="domain" description="Ig-like V-type">
    <location>
        <begin position="26"/>
        <end position="125"/>
    </location>
</feature>
<feature type="domain" description="Ig-like C2-type 1">
    <location>
        <begin position="126"/>
        <end position="203"/>
    </location>
</feature>
<feature type="domain" description="Ig-like C2-type 2">
    <location>
        <begin position="204"/>
        <end position="317"/>
    </location>
</feature>
<feature type="domain" description="Ig-like C2-type 3">
    <location>
        <begin position="318"/>
        <end position="374"/>
    </location>
</feature>
<feature type="modified residue" description="Phosphoserine" evidence="2">
    <location>
        <position position="433"/>
    </location>
</feature>
<feature type="modified residue" description="Phosphoserine" evidence="2">
    <location>
        <position position="440"/>
    </location>
</feature>
<feature type="modified residue" description="Phosphoserine" evidence="2">
    <location>
        <position position="456"/>
    </location>
</feature>
<feature type="lipid moiety-binding region" description="S-palmitoyl cysteine" evidence="1">
    <location>
        <position position="419"/>
    </location>
</feature>
<feature type="lipid moiety-binding region" description="S-palmitoyl cysteine" evidence="1">
    <location>
        <position position="422"/>
    </location>
</feature>
<feature type="glycosylation site" description="N-linked (GlcNAc...) asparagine" evidence="3">
    <location>
        <position position="42"/>
    </location>
</feature>
<feature type="glycosylation site" description="N-linked (GlcNAc...) asparagine" evidence="3">
    <location>
        <position position="281"/>
    </location>
</feature>
<feature type="glycosylation site" description="N-linked (GlcNAc...) asparagine" evidence="3">
    <location>
        <position position="296"/>
    </location>
</feature>
<feature type="glycosylation site" description="N-linked (GlcNAc...) asparagine" evidence="3">
    <location>
        <position position="325"/>
    </location>
</feature>
<feature type="disulfide bond" evidence="4">
    <location>
        <begin position="41"/>
        <end position="109"/>
    </location>
</feature>
<feature type="disulfide bond" evidence="4">
    <location>
        <begin position="155"/>
        <end position="184"/>
    </location>
</feature>
<feature type="disulfide bond" evidence="4">
    <location>
        <begin position="328"/>
        <end position="370"/>
    </location>
</feature>
<feature type="sequence conflict" description="In Ref. 2; CAA51748 and 3; AAB60875." evidence="5" ref="2 3">
    <original>K</original>
    <variation>N</variation>
    <location>
        <position position="46"/>
    </location>
</feature>
<feature type="sequence conflict" description="In Ref. 3; AAB60873." evidence="5" ref="3">
    <original>I</original>
    <variation>T</variation>
    <location>
        <position position="59"/>
    </location>
</feature>
<feature type="sequence conflict" description="In Ref. 1; BAA13132." evidence="5" ref="1">
    <original>K</original>
    <variation>E</variation>
    <location>
        <position position="115"/>
    </location>
</feature>
<feature type="sequence conflict" description="In Ref. 3; AAB60873 and 4; AAC25124." evidence="5" ref="3 4">
    <original>G</original>
    <variation>V</variation>
    <location>
        <position position="165"/>
    </location>
</feature>
<feature type="sequence conflict" description="In Ref. 2 and 3." evidence="5" ref="2 3">
    <original>M</original>
    <variation>V</variation>
    <location>
        <position position="200"/>
    </location>
</feature>
<feature type="sequence conflict" description="In Ref. 3; AAB60873." evidence="5" ref="3">
    <original>F</original>
    <variation>L</variation>
    <location>
        <position position="227"/>
    </location>
</feature>
<feature type="sequence conflict" description="In Ref. 3; AAB60873." evidence="5" ref="3">
    <original>K</original>
    <variation>E</variation>
    <location>
        <position position="271"/>
    </location>
</feature>
<feature type="sequence conflict" description="In Ref. 3; AAB60873." evidence="5" ref="3">
    <original>N</original>
    <variation>H</variation>
    <location>
        <position position="281"/>
    </location>
</feature>
<organism>
    <name type="scientific">Chlorocebus aethiops</name>
    <name type="common">Green monkey</name>
    <name type="synonym">Cercopithecus aethiops</name>
    <dbReference type="NCBI Taxonomy" id="9534"/>
    <lineage>
        <taxon>Eukaryota</taxon>
        <taxon>Metazoa</taxon>
        <taxon>Chordata</taxon>
        <taxon>Craniata</taxon>
        <taxon>Vertebrata</taxon>
        <taxon>Euteleostomi</taxon>
        <taxon>Mammalia</taxon>
        <taxon>Eutheria</taxon>
        <taxon>Euarchontoglires</taxon>
        <taxon>Primates</taxon>
        <taxon>Haplorrhini</taxon>
        <taxon>Catarrhini</taxon>
        <taxon>Cercopithecidae</taxon>
        <taxon>Cercopithecinae</taxon>
        <taxon>Chlorocebus</taxon>
    </lineage>
</organism>
<proteinExistence type="evidence at transcript level"/>
<evidence type="ECO:0000250" key="1"/>
<evidence type="ECO:0000250" key="2">
    <source>
        <dbReference type="UniProtKB" id="P01730"/>
    </source>
</evidence>
<evidence type="ECO:0000255" key="3"/>
<evidence type="ECO:0000255" key="4">
    <source>
        <dbReference type="PROSITE-ProRule" id="PRU00114"/>
    </source>
</evidence>
<evidence type="ECO:0000305" key="5"/>
<gene>
    <name type="primary">CD4</name>
</gene>
<comment type="function">
    <text evidence="2">Integral membrane glycoprotein that plays an essential role in the immune response and serves multiple functions in responses against both external and internal offenses. In T-cells, functions primarily as a coreceptor for MHC class II molecule:peptide complex. The antigens presented by class II peptides are derived from extracellular proteins while class I peptides are derived from cytosolic proteins. Interacts simultaneously with the T-cell receptor (TCR) and the MHC class II presented by antigen presenting cells (APCs). In turn, recruits the Src kinase LCK to the vicinity of the TCR-CD3 complex. LCK then initiates different intracellular signaling pathways by phosphorylating various substrates ultimately leading to lymphokine production, motility, adhesion and activation of T-helper cells. In other cells such as macrophages or NK cells, plays a role in differentiation/activation, cytokine expression and cell migration in a TCR/LCK-independent pathway. Participates in the development of T-helper cells in the thymus and triggers the differentiation of monocytes into functional mature macrophages.</text>
</comment>
<comment type="subunit">
    <text evidence="2">Forms disulfide-linked homodimers at the cell surface. Interacts with LCK. Interacts with PTK2/FAK1. Binds to P4HB/PDI. Interacts with IL16; this interaction induces a CD4-dependent signaling in lymphocytes. Interacts (via Ig-like V-type domain) with MHCII alpha chain (via alpha-2 domain) and beta chain (via beta-2 domain); this interaction increases the affinity of TCR for peptide-MHCII. CD4 oligomerization via Ig-like C2-type 2 and 3 domains appears to be required for stable binding to MHCII and adhesion between T cells and APCs.</text>
</comment>
<comment type="subcellular location">
    <subcellularLocation>
        <location evidence="2">Cell membrane</location>
        <topology evidence="2">Single-pass type I membrane protein</topology>
    </subcellularLocation>
    <text evidence="2">Localizes to lipid rafts.</text>
</comment>
<comment type="domain">
    <text evidence="2">The Ig-like V-type domain mediates the interaction with MHCII.</text>
</comment>
<comment type="PTM">
    <text evidence="2">Palmitoylation and association with LCK contribute to the enrichment of CD4 in lipid rafts.</text>
</comment>
<comment type="PTM">
    <text evidence="2">Phosphorylated by PKC; phosphorylation plays an important role for CD4 internalization.</text>
</comment>
<dbReference type="EMBL" id="D86589">
    <property type="protein sequence ID" value="BAA13132.1"/>
    <property type="molecule type" value="mRNA"/>
</dbReference>
<dbReference type="EMBL" id="X73322">
    <property type="protein sequence ID" value="CAA51748.1"/>
    <property type="molecule type" value="mRNA"/>
</dbReference>
<dbReference type="EMBL" id="AF001226">
    <property type="protein sequence ID" value="AAB60873.1"/>
    <property type="molecule type" value="mRNA"/>
</dbReference>
<dbReference type="EMBL" id="AF001228">
    <property type="protein sequence ID" value="AAB60875.1"/>
    <property type="molecule type" value="mRNA"/>
</dbReference>
<dbReference type="EMBL" id="AF057380">
    <property type="protein sequence ID" value="AAC25124.1"/>
    <property type="molecule type" value="Genomic_DNA"/>
</dbReference>
<dbReference type="SMR" id="Q08338"/>
<dbReference type="GlyCosmos" id="Q08338">
    <property type="glycosylation" value="4 sites, No reported glycans"/>
</dbReference>
<dbReference type="GO" id="GO:0009986">
    <property type="term" value="C:cell surface"/>
    <property type="evidence" value="ECO:0007669"/>
    <property type="project" value="UniProtKB-ARBA"/>
</dbReference>
<dbReference type="GO" id="GO:0005886">
    <property type="term" value="C:plasma membrane"/>
    <property type="evidence" value="ECO:0007669"/>
    <property type="project" value="UniProtKB-SubCell"/>
</dbReference>
<dbReference type="GO" id="GO:0015026">
    <property type="term" value="F:coreceptor activity"/>
    <property type="evidence" value="ECO:0007669"/>
    <property type="project" value="InterPro"/>
</dbReference>
<dbReference type="GO" id="GO:0023026">
    <property type="term" value="F:MHC class II protein complex binding"/>
    <property type="evidence" value="ECO:0000250"/>
    <property type="project" value="UniProtKB"/>
</dbReference>
<dbReference type="GO" id="GO:0002250">
    <property type="term" value="P:adaptive immune response"/>
    <property type="evidence" value="ECO:0007669"/>
    <property type="project" value="UniProtKB-KW"/>
</dbReference>
<dbReference type="GO" id="GO:0007155">
    <property type="term" value="P:cell adhesion"/>
    <property type="evidence" value="ECO:0007669"/>
    <property type="project" value="InterPro"/>
</dbReference>
<dbReference type="GO" id="GO:0030217">
    <property type="term" value="P:T cell differentiation"/>
    <property type="evidence" value="ECO:0000250"/>
    <property type="project" value="UniProtKB"/>
</dbReference>
<dbReference type="GO" id="GO:0045058">
    <property type="term" value="P:T cell selection"/>
    <property type="evidence" value="ECO:0000250"/>
    <property type="project" value="UniProtKB"/>
</dbReference>
<dbReference type="CDD" id="cd22570">
    <property type="entry name" value="CD4_CD"/>
    <property type="match status" value="1"/>
</dbReference>
<dbReference type="CDD" id="cd07695">
    <property type="entry name" value="IgV_3_CD4"/>
    <property type="match status" value="1"/>
</dbReference>
<dbReference type="FunFam" id="1.20.5.900:FF:000001">
    <property type="entry name" value="T-cell surface glycoprotein CD4"/>
    <property type="match status" value="1"/>
</dbReference>
<dbReference type="FunFam" id="2.60.40.10:FF:001105">
    <property type="entry name" value="T-cell surface glycoprotein CD4"/>
    <property type="match status" value="1"/>
</dbReference>
<dbReference type="FunFam" id="2.60.40.10:FF:001204">
    <property type="entry name" value="T-cell surface glycoprotein CD4"/>
    <property type="match status" value="1"/>
</dbReference>
<dbReference type="FunFam" id="2.60.40.10:FF:001221">
    <property type="entry name" value="T-cell surface glycoprotein CD4"/>
    <property type="match status" value="1"/>
</dbReference>
<dbReference type="FunFam" id="2.60.40.10:FF:001253">
    <property type="entry name" value="T-cell surface glycoprotein CD4"/>
    <property type="match status" value="1"/>
</dbReference>
<dbReference type="Gene3D" id="2.60.40.10">
    <property type="entry name" value="Immunoglobulins"/>
    <property type="match status" value="4"/>
</dbReference>
<dbReference type="Gene3D" id="1.20.5.900">
    <property type="entry name" value="transmembrane domain of human cd4"/>
    <property type="match status" value="1"/>
</dbReference>
<dbReference type="InterPro" id="IPR000973">
    <property type="entry name" value="CD4"/>
</dbReference>
<dbReference type="InterPro" id="IPR015274">
    <property type="entry name" value="CD4-extracel"/>
</dbReference>
<dbReference type="InterPro" id="IPR007110">
    <property type="entry name" value="Ig-like_dom"/>
</dbReference>
<dbReference type="InterPro" id="IPR036179">
    <property type="entry name" value="Ig-like_dom_sf"/>
</dbReference>
<dbReference type="InterPro" id="IPR013783">
    <property type="entry name" value="Ig-like_fold"/>
</dbReference>
<dbReference type="InterPro" id="IPR008424">
    <property type="entry name" value="Ig_C2-set"/>
</dbReference>
<dbReference type="InterPro" id="IPR003599">
    <property type="entry name" value="Ig_sub"/>
</dbReference>
<dbReference type="InterPro" id="IPR003598">
    <property type="entry name" value="Ig_sub2"/>
</dbReference>
<dbReference type="InterPro" id="IPR013106">
    <property type="entry name" value="Ig_V-set"/>
</dbReference>
<dbReference type="InterPro" id="IPR013151">
    <property type="entry name" value="Immunoglobulin_dom"/>
</dbReference>
<dbReference type="InterPro" id="IPR021963">
    <property type="entry name" value="Tcell_CD4_Cterm"/>
</dbReference>
<dbReference type="PANTHER" id="PTHR11422">
    <property type="entry name" value="T-CELL SURFACE GLYCOPROTEIN CD4"/>
    <property type="match status" value="1"/>
</dbReference>
<dbReference type="PANTHER" id="PTHR11422:SF0">
    <property type="entry name" value="T-CELL SURFACE GLYCOPROTEIN CD4"/>
    <property type="match status" value="1"/>
</dbReference>
<dbReference type="Pfam" id="PF05790">
    <property type="entry name" value="C2-set"/>
    <property type="match status" value="2"/>
</dbReference>
<dbReference type="Pfam" id="PF09191">
    <property type="entry name" value="CD4-extracel"/>
    <property type="match status" value="1"/>
</dbReference>
<dbReference type="Pfam" id="PF00047">
    <property type="entry name" value="ig"/>
    <property type="match status" value="1"/>
</dbReference>
<dbReference type="Pfam" id="PF12104">
    <property type="entry name" value="Tcell_CD4_C"/>
    <property type="match status" value="1"/>
</dbReference>
<dbReference type="PRINTS" id="PR00692">
    <property type="entry name" value="CD4TCANTIGEN"/>
</dbReference>
<dbReference type="SMART" id="SM00409">
    <property type="entry name" value="IG"/>
    <property type="match status" value="3"/>
</dbReference>
<dbReference type="SMART" id="SM00408">
    <property type="entry name" value="IGc2"/>
    <property type="match status" value="2"/>
</dbReference>
<dbReference type="SMART" id="SM00406">
    <property type="entry name" value="IGv"/>
    <property type="match status" value="1"/>
</dbReference>
<dbReference type="SUPFAM" id="SSF48726">
    <property type="entry name" value="Immunoglobulin"/>
    <property type="match status" value="4"/>
</dbReference>
<dbReference type="PROSITE" id="PS50835">
    <property type="entry name" value="IG_LIKE"/>
    <property type="match status" value="1"/>
</dbReference>
<accession>Q08338</accession>
<accession>O02805</accession>
<accession>O77593</accession>
<accession>Q28217</accession>
<keyword id="KW-1064">Adaptive immunity</keyword>
<keyword id="KW-1003">Cell membrane</keyword>
<keyword id="KW-1015">Disulfide bond</keyword>
<keyword id="KW-0325">Glycoprotein</keyword>
<keyword id="KW-0391">Immunity</keyword>
<keyword id="KW-0393">Immunoglobulin domain</keyword>
<keyword id="KW-0449">Lipoprotein</keyword>
<keyword id="KW-0472">Membrane</keyword>
<keyword id="KW-0564">Palmitate</keyword>
<keyword id="KW-0597">Phosphoprotein</keyword>
<keyword id="KW-0677">Repeat</keyword>
<keyword id="KW-0732">Signal</keyword>
<keyword id="KW-0812">Transmembrane</keyword>
<keyword id="KW-1133">Transmembrane helix</keyword>